<sequence>MRIVINGFGRIGRLVLRQILKRNSPIEVVAINDLVAGDLLTYLFKYDSTHGSFAPQATFSDGCLVMGERKIRFLAEKDVQKLPWKDLDVDVVVESTGLFVNRDDAAKHLDSGAKRVLITAPAKGDVPTFVMGVNHQQFDPADVIISNASCTTNCLAPLAKVLLDNFGIEEGLMTTVHAATATQSVVDGPSRKDWRGGRGAFQNIIPASTGAAKAVGLCLPELKGKLTGMAFRVPVADVSVVDLTVKLSSATTYEAICEAVKHAANTSMKNIMYYTEEAVVSSDFIGCEYSSIFDAQAGVALNDRFFKLVAWYDNEIGYATRIVDLLEYVQENSK</sequence>
<protein>
    <recommendedName>
        <fullName evidence="1">Glyceraldehyde-3-phosphate dehydrogenase</fullName>
        <shortName evidence="1">GAPDH</shortName>
        <ecNumber evidence="2">1.2.1.12</ecNumber>
    </recommendedName>
    <alternativeName>
        <fullName evidence="1">NAD-dependent glyceraldehyde-3-phosphate dehydrogenase</fullName>
    </alternativeName>
</protein>
<dbReference type="EC" id="1.2.1.12" evidence="2"/>
<dbReference type="EMBL" id="U83198">
    <property type="protein sequence ID" value="AAB41228.1"/>
    <property type="status" value="ALT_INIT"/>
    <property type="molecule type" value="Genomic_DNA"/>
</dbReference>
<dbReference type="EMBL" id="AM884176">
    <property type="protein sequence ID" value="CAP04205.1"/>
    <property type="molecule type" value="Genomic_DNA"/>
</dbReference>
<dbReference type="EMBL" id="L33834">
    <property type="protein sequence ID" value="AAA74992.1"/>
    <property type="molecule type" value="Genomic_DNA"/>
</dbReference>
<dbReference type="PIR" id="G71504">
    <property type="entry name" value="G71504"/>
</dbReference>
<dbReference type="RefSeq" id="WP_009873863.1">
    <property type="nucleotide sequence ID" value="NC_010287.1"/>
</dbReference>
<dbReference type="RefSeq" id="YP_001654838.1">
    <property type="nucleotide sequence ID" value="NC_010287.1"/>
</dbReference>
<dbReference type="SMR" id="B0B879"/>
<dbReference type="KEGG" id="ctb:CTL0767"/>
<dbReference type="PATRIC" id="fig|471472.4.peg.823"/>
<dbReference type="HOGENOM" id="CLU_030140_0_3_0"/>
<dbReference type="UniPathway" id="UPA00109">
    <property type="reaction ID" value="UER00184"/>
</dbReference>
<dbReference type="Proteomes" id="UP001154402">
    <property type="component" value="Chromosome"/>
</dbReference>
<dbReference type="GO" id="GO:0005737">
    <property type="term" value="C:cytoplasm"/>
    <property type="evidence" value="ECO:0007669"/>
    <property type="project" value="UniProtKB-SubCell"/>
</dbReference>
<dbReference type="GO" id="GO:0004365">
    <property type="term" value="F:glyceraldehyde-3-phosphate dehydrogenase (NAD+) (phosphorylating) activity"/>
    <property type="evidence" value="ECO:0000250"/>
    <property type="project" value="UniProtKB"/>
</dbReference>
<dbReference type="GO" id="GO:0051287">
    <property type="term" value="F:NAD binding"/>
    <property type="evidence" value="ECO:0000250"/>
    <property type="project" value="UniProtKB"/>
</dbReference>
<dbReference type="GO" id="GO:0050661">
    <property type="term" value="F:NADP binding"/>
    <property type="evidence" value="ECO:0007669"/>
    <property type="project" value="InterPro"/>
</dbReference>
<dbReference type="GO" id="GO:0006006">
    <property type="term" value="P:glucose metabolic process"/>
    <property type="evidence" value="ECO:0007669"/>
    <property type="project" value="InterPro"/>
</dbReference>
<dbReference type="GO" id="GO:0006096">
    <property type="term" value="P:glycolytic process"/>
    <property type="evidence" value="ECO:0007669"/>
    <property type="project" value="UniProtKB-UniPathway"/>
</dbReference>
<dbReference type="CDD" id="cd18126">
    <property type="entry name" value="GAPDH_I_C"/>
    <property type="match status" value="1"/>
</dbReference>
<dbReference type="CDD" id="cd05214">
    <property type="entry name" value="GAPDH_I_N"/>
    <property type="match status" value="1"/>
</dbReference>
<dbReference type="FunFam" id="3.30.360.10:FF:000001">
    <property type="entry name" value="Glyceraldehyde-3-phosphate dehydrogenase"/>
    <property type="match status" value="1"/>
</dbReference>
<dbReference type="FunFam" id="3.40.50.720:FF:000001">
    <property type="entry name" value="Glyceraldehyde-3-phosphate dehydrogenase"/>
    <property type="match status" value="1"/>
</dbReference>
<dbReference type="Gene3D" id="3.30.360.10">
    <property type="entry name" value="Dihydrodipicolinate Reductase, domain 2"/>
    <property type="match status" value="1"/>
</dbReference>
<dbReference type="Gene3D" id="3.40.50.720">
    <property type="entry name" value="NAD(P)-binding Rossmann-like Domain"/>
    <property type="match status" value="1"/>
</dbReference>
<dbReference type="InterPro" id="IPR020831">
    <property type="entry name" value="GlycerAld/Erythrose_P_DH"/>
</dbReference>
<dbReference type="InterPro" id="IPR020830">
    <property type="entry name" value="GlycerAld_3-P_DH_AS"/>
</dbReference>
<dbReference type="InterPro" id="IPR020829">
    <property type="entry name" value="GlycerAld_3-P_DH_cat"/>
</dbReference>
<dbReference type="InterPro" id="IPR020828">
    <property type="entry name" value="GlycerAld_3-P_DH_NAD(P)-bd"/>
</dbReference>
<dbReference type="InterPro" id="IPR006424">
    <property type="entry name" value="Glyceraldehyde-3-P_DH_1"/>
</dbReference>
<dbReference type="InterPro" id="IPR036291">
    <property type="entry name" value="NAD(P)-bd_dom_sf"/>
</dbReference>
<dbReference type="NCBIfam" id="TIGR01534">
    <property type="entry name" value="GAPDH-I"/>
    <property type="match status" value="1"/>
</dbReference>
<dbReference type="PANTHER" id="PTHR10836">
    <property type="entry name" value="GLYCERALDEHYDE 3-PHOSPHATE DEHYDROGENASE"/>
    <property type="match status" value="1"/>
</dbReference>
<dbReference type="PANTHER" id="PTHR10836:SF76">
    <property type="entry name" value="GLYCERALDEHYDE-3-PHOSPHATE DEHYDROGENASE-RELATED"/>
    <property type="match status" value="1"/>
</dbReference>
<dbReference type="Pfam" id="PF02800">
    <property type="entry name" value="Gp_dh_C"/>
    <property type="match status" value="1"/>
</dbReference>
<dbReference type="Pfam" id="PF00044">
    <property type="entry name" value="Gp_dh_N"/>
    <property type="match status" value="1"/>
</dbReference>
<dbReference type="PIRSF" id="PIRSF000149">
    <property type="entry name" value="GAP_DH"/>
    <property type="match status" value="1"/>
</dbReference>
<dbReference type="PRINTS" id="PR00078">
    <property type="entry name" value="G3PDHDRGNASE"/>
</dbReference>
<dbReference type="SMART" id="SM00846">
    <property type="entry name" value="Gp_dh_N"/>
    <property type="match status" value="1"/>
</dbReference>
<dbReference type="SUPFAM" id="SSF55347">
    <property type="entry name" value="Glyceraldehyde-3-phosphate dehydrogenase-like, C-terminal domain"/>
    <property type="match status" value="1"/>
</dbReference>
<dbReference type="SUPFAM" id="SSF51735">
    <property type="entry name" value="NAD(P)-binding Rossmann-fold domains"/>
    <property type="match status" value="1"/>
</dbReference>
<dbReference type="PROSITE" id="PS00071">
    <property type="entry name" value="GAPDH"/>
    <property type="match status" value="1"/>
</dbReference>
<keyword id="KW-0963">Cytoplasm</keyword>
<keyword id="KW-0324">Glycolysis</keyword>
<keyword id="KW-0520">NAD</keyword>
<keyword id="KW-0547">Nucleotide-binding</keyword>
<keyword id="KW-0560">Oxidoreductase</keyword>
<evidence type="ECO:0000250" key="1">
    <source>
        <dbReference type="UniProtKB" id="P00362"/>
    </source>
</evidence>
<evidence type="ECO:0000250" key="2">
    <source>
        <dbReference type="UniProtKB" id="P09124"/>
    </source>
</evidence>
<evidence type="ECO:0000305" key="3"/>
<organism>
    <name type="scientific">Chlamydia trachomatis serovar L2 (strain ATCC VR-902B / DSM 19102 / 434/Bu)</name>
    <dbReference type="NCBI Taxonomy" id="471472"/>
    <lineage>
        <taxon>Bacteria</taxon>
        <taxon>Pseudomonadati</taxon>
        <taxon>Chlamydiota</taxon>
        <taxon>Chlamydiia</taxon>
        <taxon>Chlamydiales</taxon>
        <taxon>Chlamydiaceae</taxon>
        <taxon>Chlamydia/Chlamydophila group</taxon>
        <taxon>Chlamydia</taxon>
    </lineage>
</organism>
<gene>
    <name type="primary">gap</name>
    <name type="synonym">gapA</name>
    <name type="ordered locus">CTL0767</name>
</gene>
<name>G3P_CHLT2</name>
<proteinExistence type="inferred from homology"/>
<comment type="function">
    <text evidence="1">Catalyzes the oxidative phosphorylation of glyceraldehyde 3-phosphate (G3P) to 1,3-bisphosphoglycerate (BPG) using the cofactor NAD. The first reaction step involves the formation of a hemiacetal intermediate between G3P and a cysteine residue, and this hemiacetal intermediate is then oxidized to a thioester, with concomitant reduction of NAD to NADH. The reduced NADH is then exchanged with the second NAD, and the thioester is attacked by a nucleophilic inorganic phosphate to produce BPG.</text>
</comment>
<comment type="catalytic activity">
    <reaction evidence="2">
        <text>D-glyceraldehyde 3-phosphate + phosphate + NAD(+) = (2R)-3-phospho-glyceroyl phosphate + NADH + H(+)</text>
        <dbReference type="Rhea" id="RHEA:10300"/>
        <dbReference type="ChEBI" id="CHEBI:15378"/>
        <dbReference type="ChEBI" id="CHEBI:43474"/>
        <dbReference type="ChEBI" id="CHEBI:57540"/>
        <dbReference type="ChEBI" id="CHEBI:57604"/>
        <dbReference type="ChEBI" id="CHEBI:57945"/>
        <dbReference type="ChEBI" id="CHEBI:59776"/>
        <dbReference type="EC" id="1.2.1.12"/>
    </reaction>
</comment>
<comment type="pathway">
    <text evidence="3">Carbohydrate degradation; glycolysis; pyruvate from D-glyceraldehyde 3-phosphate: step 1/5.</text>
</comment>
<comment type="subunit">
    <text evidence="1">Homotetramer.</text>
</comment>
<comment type="subcellular location">
    <subcellularLocation>
        <location evidence="3">Cytoplasm</location>
    </subcellularLocation>
</comment>
<comment type="similarity">
    <text evidence="3">Belongs to the glyceraldehyde-3-phosphate dehydrogenase family.</text>
</comment>
<comment type="sequence caution" evidence="3">
    <conflict type="erroneous initiation">
        <sequence resource="EMBL-CDS" id="AAB41228"/>
    </conflict>
    <text>Extended N-terminus.</text>
</comment>
<feature type="chain" id="PRO_0000391795" description="Glyceraldehyde-3-phosphate dehydrogenase">
    <location>
        <begin position="1"/>
        <end position="334"/>
    </location>
</feature>
<feature type="active site" description="Nucleophile" evidence="1">
    <location>
        <position position="150"/>
    </location>
</feature>
<feature type="binding site" evidence="1">
    <location>
        <begin position="10"/>
        <end position="11"/>
    </location>
    <ligand>
        <name>NAD(+)</name>
        <dbReference type="ChEBI" id="CHEBI:57540"/>
    </ligand>
</feature>
<feature type="binding site" evidence="1">
    <location>
        <position position="33"/>
    </location>
    <ligand>
        <name>NAD(+)</name>
        <dbReference type="ChEBI" id="CHEBI:57540"/>
    </ligand>
</feature>
<feature type="binding site" evidence="1">
    <location>
        <position position="77"/>
    </location>
    <ligand>
        <name>NAD(+)</name>
        <dbReference type="ChEBI" id="CHEBI:57540"/>
    </ligand>
</feature>
<feature type="binding site" evidence="1">
    <location>
        <position position="119"/>
    </location>
    <ligand>
        <name>NAD(+)</name>
        <dbReference type="ChEBI" id="CHEBI:57540"/>
    </ligand>
</feature>
<feature type="binding site" evidence="1">
    <location>
        <begin position="149"/>
        <end position="151"/>
    </location>
    <ligand>
        <name>D-glyceraldehyde 3-phosphate</name>
        <dbReference type="ChEBI" id="CHEBI:59776"/>
    </ligand>
</feature>
<feature type="binding site" evidence="1">
    <location>
        <position position="180"/>
    </location>
    <ligand>
        <name>D-glyceraldehyde 3-phosphate</name>
        <dbReference type="ChEBI" id="CHEBI:59776"/>
    </ligand>
</feature>
<feature type="binding site" evidence="1">
    <location>
        <begin position="209"/>
        <end position="210"/>
    </location>
    <ligand>
        <name>D-glyceraldehyde 3-phosphate</name>
        <dbReference type="ChEBI" id="CHEBI:59776"/>
    </ligand>
</feature>
<feature type="binding site" evidence="1">
    <location>
        <position position="232"/>
    </location>
    <ligand>
        <name>D-glyceraldehyde 3-phosphate</name>
        <dbReference type="ChEBI" id="CHEBI:59776"/>
    </ligand>
</feature>
<feature type="binding site" evidence="1">
    <location>
        <position position="314"/>
    </location>
    <ligand>
        <name>NAD(+)</name>
        <dbReference type="ChEBI" id="CHEBI:57540"/>
    </ligand>
</feature>
<feature type="site" description="Activates thiol group during catalysis" evidence="1">
    <location>
        <position position="177"/>
    </location>
</feature>
<accession>B0B879</accession>
<accession>O84513</accession>
<accession>Q46450</accession>
<reference key="1">
    <citation type="journal article" date="1999" name="Mol. Microbiol.">
        <title>Glucose metabolism in Chlamydia trachomatis: the 'energy parasite' hypothesis revisited.</title>
        <authorList>
            <person name="Iliffe-Lee E.R."/>
            <person name="McClarty G."/>
        </authorList>
    </citation>
    <scope>NUCLEOTIDE SEQUENCE [GENOMIC DNA]</scope>
</reference>
<reference key="2">
    <citation type="journal article" date="2008" name="Genome Res.">
        <title>Chlamydia trachomatis: genome sequence analysis of lymphogranuloma venereum isolates.</title>
        <authorList>
            <person name="Thomson N.R."/>
            <person name="Holden M.T.G."/>
            <person name="Carder C."/>
            <person name="Lennard N."/>
            <person name="Lockey S.J."/>
            <person name="Marsh P."/>
            <person name="Skipp P."/>
            <person name="O'Connor C.D."/>
            <person name="Goodhead I."/>
            <person name="Norbertzcak H."/>
            <person name="Harris B."/>
            <person name="Ormond D."/>
            <person name="Rance R."/>
            <person name="Quail M.A."/>
            <person name="Parkhill J."/>
            <person name="Stephens R.S."/>
            <person name="Clarke I.N."/>
        </authorList>
    </citation>
    <scope>NUCLEOTIDE SEQUENCE [LARGE SCALE GENOMIC DNA]</scope>
    <source>
        <strain>ATCC VR-902B / DSM 19102 / 434/Bu</strain>
    </source>
</reference>
<reference key="3">
    <citation type="journal article" date="1995" name="J. Bacteriol.">
        <title>Chlamydia trachomatis RNA polymerase alpha subunit: sequence and structural analysis.</title>
        <authorList>
            <person name="Gu L.J."/>
            <person name="Wenman W.M."/>
            <person name="Remacha M."/>
            <person name="Meuser R.U."/>
            <person name="Coffin J.M."/>
            <person name="Kaul R."/>
        </authorList>
    </citation>
    <scope>NUCLEOTIDE SEQUENCE [GENOMIC DNA] OF 1-82</scope>
</reference>